<dbReference type="EMBL" id="CP001103">
    <property type="protein sequence ID" value="AEA96710.1"/>
    <property type="molecule type" value="Genomic_DNA"/>
</dbReference>
<dbReference type="SMR" id="B4S170"/>
<dbReference type="KEGG" id="amc:MADE_1002810"/>
<dbReference type="HOGENOM" id="CLU_086034_5_1_6"/>
<dbReference type="Proteomes" id="UP000001870">
    <property type="component" value="Chromosome"/>
</dbReference>
<dbReference type="GO" id="GO:0033281">
    <property type="term" value="C:TAT protein transport complex"/>
    <property type="evidence" value="ECO:0007669"/>
    <property type="project" value="UniProtKB-UniRule"/>
</dbReference>
<dbReference type="GO" id="GO:0008320">
    <property type="term" value="F:protein transmembrane transporter activity"/>
    <property type="evidence" value="ECO:0007669"/>
    <property type="project" value="UniProtKB-UniRule"/>
</dbReference>
<dbReference type="GO" id="GO:0043953">
    <property type="term" value="P:protein transport by the Tat complex"/>
    <property type="evidence" value="ECO:0007669"/>
    <property type="project" value="UniProtKB-UniRule"/>
</dbReference>
<dbReference type="Gene3D" id="1.20.5.3310">
    <property type="match status" value="1"/>
</dbReference>
<dbReference type="HAMAP" id="MF_00236">
    <property type="entry name" value="TatA_E"/>
    <property type="match status" value="1"/>
</dbReference>
<dbReference type="InterPro" id="IPR003369">
    <property type="entry name" value="TatA/B/E"/>
</dbReference>
<dbReference type="InterPro" id="IPR006312">
    <property type="entry name" value="TatA/E"/>
</dbReference>
<dbReference type="NCBIfam" id="NF002813">
    <property type="entry name" value="PRK02958.1"/>
    <property type="match status" value="1"/>
</dbReference>
<dbReference type="NCBIfam" id="TIGR01411">
    <property type="entry name" value="tatAE"/>
    <property type="match status" value="1"/>
</dbReference>
<dbReference type="PANTHER" id="PTHR42982">
    <property type="entry name" value="SEC-INDEPENDENT PROTEIN TRANSLOCASE PROTEIN TATA"/>
    <property type="match status" value="1"/>
</dbReference>
<dbReference type="PANTHER" id="PTHR42982:SF1">
    <property type="entry name" value="SEC-INDEPENDENT PROTEIN TRANSLOCASE PROTEIN TATA"/>
    <property type="match status" value="1"/>
</dbReference>
<dbReference type="Pfam" id="PF02416">
    <property type="entry name" value="TatA_B_E"/>
    <property type="match status" value="1"/>
</dbReference>
<sequence>MGGISIWQLLIILVIVVLLFGTKRLKGIGTDLGGAIKGFKKAVSEEEKDADFEQKKQVEEKSAAEPVSTETQSDVKEKS</sequence>
<gene>
    <name evidence="1" type="primary">tatA</name>
    <name type="ordered locus">MADE_1002810</name>
</gene>
<evidence type="ECO:0000255" key="1">
    <source>
        <dbReference type="HAMAP-Rule" id="MF_00236"/>
    </source>
</evidence>
<evidence type="ECO:0000256" key="2">
    <source>
        <dbReference type="SAM" id="MobiDB-lite"/>
    </source>
</evidence>
<name>TATA_ALTMD</name>
<comment type="function">
    <text evidence="1">Part of the twin-arginine translocation (Tat) system that transports large folded proteins containing a characteristic twin-arginine motif in their signal peptide across membranes. TatA could form the protein-conducting channel of the Tat system.</text>
</comment>
<comment type="subunit">
    <text evidence="1">The Tat system comprises two distinct complexes: a TatABC complex, containing multiple copies of TatA, TatB and TatC subunits, and a separate TatA complex, containing only TatA subunits. Substrates initially bind to the TatABC complex, which probably triggers association of the separate TatA complex to form the active translocon.</text>
</comment>
<comment type="subcellular location">
    <subcellularLocation>
        <location evidence="1">Cell inner membrane</location>
        <topology evidence="1">Single-pass membrane protein</topology>
    </subcellularLocation>
</comment>
<comment type="similarity">
    <text evidence="1">Belongs to the TatA/E family.</text>
</comment>
<keyword id="KW-0997">Cell inner membrane</keyword>
<keyword id="KW-1003">Cell membrane</keyword>
<keyword id="KW-0472">Membrane</keyword>
<keyword id="KW-0653">Protein transport</keyword>
<keyword id="KW-0811">Translocation</keyword>
<keyword id="KW-0812">Transmembrane</keyword>
<keyword id="KW-1133">Transmembrane helix</keyword>
<keyword id="KW-0813">Transport</keyword>
<feature type="chain" id="PRO_1000125184" description="Sec-independent protein translocase protein TatA">
    <location>
        <begin position="1"/>
        <end position="79"/>
    </location>
</feature>
<feature type="transmembrane region" description="Helical" evidence="1">
    <location>
        <begin position="1"/>
        <end position="21"/>
    </location>
</feature>
<feature type="region of interest" description="Disordered" evidence="2">
    <location>
        <begin position="45"/>
        <end position="79"/>
    </location>
</feature>
<feature type="compositionally biased region" description="Basic and acidic residues" evidence="2">
    <location>
        <begin position="51"/>
        <end position="63"/>
    </location>
</feature>
<organism>
    <name type="scientific">Alteromonas mediterranea (strain DSM 17117 / CIP 110805 / LMG 28347 / Deep ecotype)</name>
    <dbReference type="NCBI Taxonomy" id="1774373"/>
    <lineage>
        <taxon>Bacteria</taxon>
        <taxon>Pseudomonadati</taxon>
        <taxon>Pseudomonadota</taxon>
        <taxon>Gammaproteobacteria</taxon>
        <taxon>Alteromonadales</taxon>
        <taxon>Alteromonadaceae</taxon>
        <taxon>Alteromonas/Salinimonas group</taxon>
        <taxon>Alteromonas</taxon>
    </lineage>
</organism>
<reference key="1">
    <citation type="journal article" date="2008" name="ISME J.">
        <title>Comparative genomics of two ecotypes of the marine planktonic copiotroph Alteromonas macleodii suggests alternative lifestyles associated with different kinds of particulate organic matter.</title>
        <authorList>
            <person name="Ivars-Martinez E."/>
            <person name="Martin-Cuadrado A.-B."/>
            <person name="D'Auria G."/>
            <person name="Mira A."/>
            <person name="Ferriera S."/>
            <person name="Johnson J."/>
            <person name="Friedman R."/>
            <person name="Rodriguez-Valera F."/>
        </authorList>
    </citation>
    <scope>NUCLEOTIDE SEQUENCE [LARGE SCALE GENOMIC DNA]</scope>
    <source>
        <strain>DSM 17117 / CIP 110805 / LMG 28347 / Deep ecotype</strain>
    </source>
</reference>
<accession>B4S170</accession>
<accession>F2G7D0</accession>
<proteinExistence type="inferred from homology"/>
<protein>
    <recommendedName>
        <fullName evidence="1">Sec-independent protein translocase protein TatA</fullName>
    </recommendedName>
</protein>